<dbReference type="EMBL" id="CP000514">
    <property type="protein sequence ID" value="ABM18120.1"/>
    <property type="molecule type" value="Genomic_DNA"/>
</dbReference>
<dbReference type="RefSeq" id="WP_011784538.1">
    <property type="nucleotide sequence ID" value="NC_008740.1"/>
</dbReference>
<dbReference type="SMR" id="A1TZF1"/>
<dbReference type="STRING" id="351348.Maqu_1028"/>
<dbReference type="GeneID" id="31821654"/>
<dbReference type="KEGG" id="maq:Maqu_1028"/>
<dbReference type="eggNOG" id="COG0776">
    <property type="taxonomic scope" value="Bacteria"/>
</dbReference>
<dbReference type="HOGENOM" id="CLU_105066_2_0_6"/>
<dbReference type="OrthoDB" id="9804203at2"/>
<dbReference type="Proteomes" id="UP000000998">
    <property type="component" value="Chromosome"/>
</dbReference>
<dbReference type="GO" id="GO:0005694">
    <property type="term" value="C:chromosome"/>
    <property type="evidence" value="ECO:0007669"/>
    <property type="project" value="InterPro"/>
</dbReference>
<dbReference type="GO" id="GO:0005829">
    <property type="term" value="C:cytosol"/>
    <property type="evidence" value="ECO:0007669"/>
    <property type="project" value="TreeGrafter"/>
</dbReference>
<dbReference type="GO" id="GO:0003677">
    <property type="term" value="F:DNA binding"/>
    <property type="evidence" value="ECO:0007669"/>
    <property type="project" value="UniProtKB-UniRule"/>
</dbReference>
<dbReference type="GO" id="GO:0030527">
    <property type="term" value="F:structural constituent of chromatin"/>
    <property type="evidence" value="ECO:0007669"/>
    <property type="project" value="InterPro"/>
</dbReference>
<dbReference type="GO" id="GO:0006310">
    <property type="term" value="P:DNA recombination"/>
    <property type="evidence" value="ECO:0007669"/>
    <property type="project" value="UniProtKB-UniRule"/>
</dbReference>
<dbReference type="GO" id="GO:0006355">
    <property type="term" value="P:regulation of DNA-templated transcription"/>
    <property type="evidence" value="ECO:0007669"/>
    <property type="project" value="UniProtKB-UniRule"/>
</dbReference>
<dbReference type="GO" id="GO:0006417">
    <property type="term" value="P:regulation of translation"/>
    <property type="evidence" value="ECO:0007669"/>
    <property type="project" value="UniProtKB-UniRule"/>
</dbReference>
<dbReference type="CDD" id="cd13836">
    <property type="entry name" value="IHF_B"/>
    <property type="match status" value="1"/>
</dbReference>
<dbReference type="FunFam" id="4.10.520.10:FF:000003">
    <property type="entry name" value="Integration host factor subunit beta"/>
    <property type="match status" value="1"/>
</dbReference>
<dbReference type="Gene3D" id="4.10.520.10">
    <property type="entry name" value="IHF-like DNA-binding proteins"/>
    <property type="match status" value="1"/>
</dbReference>
<dbReference type="HAMAP" id="MF_00381">
    <property type="entry name" value="IHF_beta"/>
    <property type="match status" value="1"/>
</dbReference>
<dbReference type="InterPro" id="IPR000119">
    <property type="entry name" value="Hist_DNA-bd"/>
</dbReference>
<dbReference type="InterPro" id="IPR020816">
    <property type="entry name" value="Histone-like_DNA-bd_CS"/>
</dbReference>
<dbReference type="InterPro" id="IPR010992">
    <property type="entry name" value="IHF-like_DNA-bd_dom_sf"/>
</dbReference>
<dbReference type="InterPro" id="IPR005685">
    <property type="entry name" value="IHF_beta"/>
</dbReference>
<dbReference type="NCBIfam" id="TIGR00988">
    <property type="entry name" value="hip"/>
    <property type="match status" value="1"/>
</dbReference>
<dbReference type="NCBIfam" id="NF001222">
    <property type="entry name" value="PRK00199.1"/>
    <property type="match status" value="1"/>
</dbReference>
<dbReference type="PANTHER" id="PTHR33175">
    <property type="entry name" value="DNA-BINDING PROTEIN HU"/>
    <property type="match status" value="1"/>
</dbReference>
<dbReference type="PANTHER" id="PTHR33175:SF5">
    <property type="entry name" value="INTEGRATION HOST FACTOR SUBUNIT BETA"/>
    <property type="match status" value="1"/>
</dbReference>
<dbReference type="Pfam" id="PF00216">
    <property type="entry name" value="Bac_DNA_binding"/>
    <property type="match status" value="1"/>
</dbReference>
<dbReference type="PRINTS" id="PR01727">
    <property type="entry name" value="DNABINDINGHU"/>
</dbReference>
<dbReference type="SMART" id="SM00411">
    <property type="entry name" value="BHL"/>
    <property type="match status" value="1"/>
</dbReference>
<dbReference type="SUPFAM" id="SSF47729">
    <property type="entry name" value="IHF-like DNA-binding proteins"/>
    <property type="match status" value="1"/>
</dbReference>
<dbReference type="PROSITE" id="PS00045">
    <property type="entry name" value="HISTONE_LIKE"/>
    <property type="match status" value="1"/>
</dbReference>
<sequence>MTKSELVELIASKQTQLSVKDVELAVKSIIEHMSQSLADGQRIEIRGFGSFSLHHRAARTGRNPKTGDAVQLPAKFVPHFKPGKELREQVNDSMKKGF</sequence>
<keyword id="KW-0233">DNA recombination</keyword>
<keyword id="KW-0238">DNA-binding</keyword>
<keyword id="KW-0804">Transcription</keyword>
<keyword id="KW-0805">Transcription regulation</keyword>
<keyword id="KW-0810">Translation regulation</keyword>
<gene>
    <name evidence="1" type="primary">ihfB</name>
    <name evidence="1" type="synonym">himD</name>
    <name type="ordered locus">Maqu_1028</name>
</gene>
<organism>
    <name type="scientific">Marinobacter nauticus (strain ATCC 700491 / DSM 11845 / VT8)</name>
    <name type="common">Marinobacter aquaeolei</name>
    <dbReference type="NCBI Taxonomy" id="351348"/>
    <lineage>
        <taxon>Bacteria</taxon>
        <taxon>Pseudomonadati</taxon>
        <taxon>Pseudomonadota</taxon>
        <taxon>Gammaproteobacteria</taxon>
        <taxon>Pseudomonadales</taxon>
        <taxon>Marinobacteraceae</taxon>
        <taxon>Marinobacter</taxon>
    </lineage>
</organism>
<protein>
    <recommendedName>
        <fullName evidence="1">Integration host factor subunit beta</fullName>
        <shortName evidence="1">IHF-beta</shortName>
    </recommendedName>
</protein>
<name>IHFB_MARN8</name>
<proteinExistence type="inferred from homology"/>
<accession>A1TZF1</accession>
<reference key="1">
    <citation type="journal article" date="2011" name="Appl. Environ. Microbiol.">
        <title>Genomic potential of Marinobacter aquaeolei, a biogeochemical 'opportunitroph'.</title>
        <authorList>
            <person name="Singer E."/>
            <person name="Webb E.A."/>
            <person name="Nelson W.C."/>
            <person name="Heidelberg J.F."/>
            <person name="Ivanova N."/>
            <person name="Pati A."/>
            <person name="Edwards K.J."/>
        </authorList>
    </citation>
    <scope>NUCLEOTIDE SEQUENCE [LARGE SCALE GENOMIC DNA]</scope>
    <source>
        <strain>ATCC 700491 / DSM 11845 / VT8</strain>
    </source>
</reference>
<evidence type="ECO:0000255" key="1">
    <source>
        <dbReference type="HAMAP-Rule" id="MF_00381"/>
    </source>
</evidence>
<comment type="function">
    <text evidence="1">This protein is one of the two subunits of integration host factor, a specific DNA-binding protein that functions in genetic recombination as well as in transcriptional and translational control.</text>
</comment>
<comment type="subunit">
    <text evidence="1">Heterodimer of an alpha and a beta chain.</text>
</comment>
<comment type="similarity">
    <text evidence="1">Belongs to the bacterial histone-like protein family.</text>
</comment>
<feature type="chain" id="PRO_1000060616" description="Integration host factor subunit beta">
    <location>
        <begin position="1"/>
        <end position="98"/>
    </location>
</feature>